<gene>
    <name type="primary">EFTUD2</name>
    <name type="synonym">SNRP116</name>
</gene>
<accession>Q5R6E0</accession>
<dbReference type="EMBL" id="CR860551">
    <property type="protein sequence ID" value="CAH92676.1"/>
    <property type="molecule type" value="mRNA"/>
</dbReference>
<dbReference type="RefSeq" id="NP_001126566.1">
    <property type="nucleotide sequence ID" value="NM_001133094.1"/>
</dbReference>
<dbReference type="SMR" id="Q5R6E0"/>
<dbReference type="FunCoup" id="Q5R6E0">
    <property type="interactions" value="4389"/>
</dbReference>
<dbReference type="STRING" id="9601.ENSPPYP00000009352"/>
<dbReference type="GeneID" id="100173557"/>
<dbReference type="KEGG" id="pon:100173557"/>
<dbReference type="CTD" id="9343"/>
<dbReference type="eggNOG" id="KOG0468">
    <property type="taxonomic scope" value="Eukaryota"/>
</dbReference>
<dbReference type="InParanoid" id="Q5R6E0"/>
<dbReference type="OrthoDB" id="364892at2759"/>
<dbReference type="Proteomes" id="UP000001595">
    <property type="component" value="Unplaced"/>
</dbReference>
<dbReference type="GO" id="GO:0005829">
    <property type="term" value="C:cytosol"/>
    <property type="evidence" value="ECO:0007669"/>
    <property type="project" value="TreeGrafter"/>
</dbReference>
<dbReference type="GO" id="GO:0005634">
    <property type="term" value="C:nucleus"/>
    <property type="evidence" value="ECO:0000250"/>
    <property type="project" value="UniProtKB"/>
</dbReference>
<dbReference type="GO" id="GO:0071007">
    <property type="term" value="C:U2-type catalytic step 2 spliceosome"/>
    <property type="evidence" value="ECO:0000250"/>
    <property type="project" value="UniProtKB"/>
</dbReference>
<dbReference type="GO" id="GO:0071005">
    <property type="term" value="C:U2-type precatalytic spliceosome"/>
    <property type="evidence" value="ECO:0000250"/>
    <property type="project" value="UniProtKB"/>
</dbReference>
<dbReference type="GO" id="GO:0046540">
    <property type="term" value="C:U4/U6 x U5 tri-snRNP complex"/>
    <property type="evidence" value="ECO:0007669"/>
    <property type="project" value="TreeGrafter"/>
</dbReference>
<dbReference type="GO" id="GO:0005525">
    <property type="term" value="F:GTP binding"/>
    <property type="evidence" value="ECO:0007669"/>
    <property type="project" value="UniProtKB-KW"/>
</dbReference>
<dbReference type="GO" id="GO:0003924">
    <property type="term" value="F:GTPase activity"/>
    <property type="evidence" value="ECO:0007669"/>
    <property type="project" value="InterPro"/>
</dbReference>
<dbReference type="GO" id="GO:0030623">
    <property type="term" value="F:U5 snRNA binding"/>
    <property type="evidence" value="ECO:0007669"/>
    <property type="project" value="TreeGrafter"/>
</dbReference>
<dbReference type="GO" id="GO:0000398">
    <property type="term" value="P:mRNA splicing, via spliceosome"/>
    <property type="evidence" value="ECO:0000250"/>
    <property type="project" value="UniProtKB"/>
</dbReference>
<dbReference type="CDD" id="cd04098">
    <property type="entry name" value="eEF2_C_snRNP"/>
    <property type="match status" value="1"/>
</dbReference>
<dbReference type="CDD" id="cd04090">
    <property type="entry name" value="EF2_II_snRNP"/>
    <property type="match status" value="1"/>
</dbReference>
<dbReference type="CDD" id="cd01683">
    <property type="entry name" value="EF2_IV_snRNP"/>
    <property type="match status" value="1"/>
</dbReference>
<dbReference type="CDD" id="cd16264">
    <property type="entry name" value="snRNP_III"/>
    <property type="match status" value="1"/>
</dbReference>
<dbReference type="CDD" id="cd04167">
    <property type="entry name" value="Snu114p"/>
    <property type="match status" value="1"/>
</dbReference>
<dbReference type="FunFam" id="3.30.70.240:FF:000004">
    <property type="entry name" value="116 kDa U5 small nuclear ribonucleoprotein"/>
    <property type="match status" value="1"/>
</dbReference>
<dbReference type="FunFam" id="2.40.30.10:FF:000029">
    <property type="entry name" value="116 kDa U5 small nuclear ribonucleoprotein component"/>
    <property type="match status" value="1"/>
</dbReference>
<dbReference type="FunFam" id="3.30.230.10:FF:000009">
    <property type="entry name" value="116 kDa U5 small nuclear ribonucleoprotein component"/>
    <property type="match status" value="1"/>
</dbReference>
<dbReference type="FunFam" id="3.40.50.300:FF:000574">
    <property type="entry name" value="116 kDa U5 small nuclear ribonucleoprotein component"/>
    <property type="match status" value="1"/>
</dbReference>
<dbReference type="FunFam" id="3.90.1430.10:FF:000001">
    <property type="entry name" value="116 kDa U5 small nuclear ribonucleoprotein component"/>
    <property type="match status" value="1"/>
</dbReference>
<dbReference type="FunFam" id="3.30.70.870:FF:000002">
    <property type="entry name" value="Translation elongation factor 2"/>
    <property type="match status" value="1"/>
</dbReference>
<dbReference type="Gene3D" id="3.30.230.10">
    <property type="match status" value="1"/>
</dbReference>
<dbReference type="Gene3D" id="3.30.70.240">
    <property type="match status" value="1"/>
</dbReference>
<dbReference type="Gene3D" id="3.30.70.870">
    <property type="entry name" value="Elongation Factor G (Translational Gtpase), domain 3"/>
    <property type="match status" value="1"/>
</dbReference>
<dbReference type="Gene3D" id="3.40.50.300">
    <property type="entry name" value="P-loop containing nucleotide triphosphate hydrolases"/>
    <property type="match status" value="1"/>
</dbReference>
<dbReference type="Gene3D" id="2.40.30.10">
    <property type="entry name" value="Translation factors"/>
    <property type="match status" value="1"/>
</dbReference>
<dbReference type="Gene3D" id="3.90.1430.10">
    <property type="entry name" value="Yeast translation eEF2 (G' domain)"/>
    <property type="match status" value="1"/>
</dbReference>
<dbReference type="InterPro" id="IPR041095">
    <property type="entry name" value="EFG_II"/>
</dbReference>
<dbReference type="InterPro" id="IPR035647">
    <property type="entry name" value="EFG_III/V"/>
</dbReference>
<dbReference type="InterPro" id="IPR000640">
    <property type="entry name" value="EFG_V-like"/>
</dbReference>
<dbReference type="InterPro" id="IPR004161">
    <property type="entry name" value="EFTu-like_2"/>
</dbReference>
<dbReference type="InterPro" id="IPR031950">
    <property type="entry name" value="EFTUD2_N"/>
</dbReference>
<dbReference type="InterPro" id="IPR027417">
    <property type="entry name" value="P-loop_NTPase"/>
</dbReference>
<dbReference type="InterPro" id="IPR020568">
    <property type="entry name" value="Ribosomal_Su5_D2-typ_SF"/>
</dbReference>
<dbReference type="InterPro" id="IPR014721">
    <property type="entry name" value="Ribsml_uS5_D2-typ_fold_subgr"/>
</dbReference>
<dbReference type="InterPro" id="IPR005225">
    <property type="entry name" value="Small_GTP-bd"/>
</dbReference>
<dbReference type="InterPro" id="IPR044121">
    <property type="entry name" value="Snu114_GTP-bd"/>
</dbReference>
<dbReference type="InterPro" id="IPR000795">
    <property type="entry name" value="T_Tr_GTP-bd_dom"/>
</dbReference>
<dbReference type="InterPro" id="IPR009000">
    <property type="entry name" value="Transl_B-barrel_sf"/>
</dbReference>
<dbReference type="InterPro" id="IPR005517">
    <property type="entry name" value="Transl_elong_EFG/EF2_IV"/>
</dbReference>
<dbReference type="InterPro" id="IPR035655">
    <property type="entry name" value="U5-116kDa_C"/>
</dbReference>
<dbReference type="NCBIfam" id="TIGR00231">
    <property type="entry name" value="small_GTP"/>
    <property type="match status" value="1"/>
</dbReference>
<dbReference type="PANTHER" id="PTHR42908:SF6">
    <property type="entry name" value="116 KDA U5 SMALL NUCLEAR RIBONUCLEOPROTEIN COMPONENT"/>
    <property type="match status" value="1"/>
</dbReference>
<dbReference type="PANTHER" id="PTHR42908">
    <property type="entry name" value="TRANSLATION ELONGATION FACTOR-RELATED"/>
    <property type="match status" value="1"/>
</dbReference>
<dbReference type="Pfam" id="PF00679">
    <property type="entry name" value="EFG_C"/>
    <property type="match status" value="1"/>
</dbReference>
<dbReference type="Pfam" id="PF14492">
    <property type="entry name" value="EFG_III"/>
    <property type="match status" value="1"/>
</dbReference>
<dbReference type="Pfam" id="PF03764">
    <property type="entry name" value="EFG_IV"/>
    <property type="match status" value="1"/>
</dbReference>
<dbReference type="Pfam" id="PF16004">
    <property type="entry name" value="EFTUD2"/>
    <property type="match status" value="1"/>
</dbReference>
<dbReference type="Pfam" id="PF00009">
    <property type="entry name" value="GTP_EFTU"/>
    <property type="match status" value="1"/>
</dbReference>
<dbReference type="Pfam" id="PF03144">
    <property type="entry name" value="GTP_EFTU_D2"/>
    <property type="match status" value="1"/>
</dbReference>
<dbReference type="PRINTS" id="PR00315">
    <property type="entry name" value="ELONGATNFCT"/>
</dbReference>
<dbReference type="SMART" id="SM00838">
    <property type="entry name" value="EFG_C"/>
    <property type="match status" value="1"/>
</dbReference>
<dbReference type="SMART" id="SM00889">
    <property type="entry name" value="EFG_IV"/>
    <property type="match status" value="1"/>
</dbReference>
<dbReference type="SUPFAM" id="SSF54980">
    <property type="entry name" value="EF-G C-terminal domain-like"/>
    <property type="match status" value="2"/>
</dbReference>
<dbReference type="SUPFAM" id="SSF52540">
    <property type="entry name" value="P-loop containing nucleoside triphosphate hydrolases"/>
    <property type="match status" value="1"/>
</dbReference>
<dbReference type="SUPFAM" id="SSF54211">
    <property type="entry name" value="Ribosomal protein S5 domain 2-like"/>
    <property type="match status" value="1"/>
</dbReference>
<dbReference type="SUPFAM" id="SSF50447">
    <property type="entry name" value="Translation proteins"/>
    <property type="match status" value="1"/>
</dbReference>
<dbReference type="PROSITE" id="PS51722">
    <property type="entry name" value="G_TR_2"/>
    <property type="match status" value="1"/>
</dbReference>
<feature type="chain" id="PRO_0000315997" description="116 kDa U5 small nuclear ribonucleoprotein component">
    <location>
        <begin position="1"/>
        <end position="972"/>
    </location>
</feature>
<feature type="domain" description="tr-type G" evidence="3">
    <location>
        <begin position="127"/>
        <end position="409"/>
    </location>
</feature>
<feature type="region of interest" description="Disordered" evidence="4">
    <location>
        <begin position="1"/>
        <end position="54"/>
    </location>
</feature>
<feature type="compositionally biased region" description="Acidic residues" evidence="4">
    <location>
        <begin position="17"/>
        <end position="26"/>
    </location>
</feature>
<feature type="compositionally biased region" description="Acidic residues" evidence="4">
    <location>
        <begin position="34"/>
        <end position="48"/>
    </location>
</feature>
<feature type="binding site" evidence="2">
    <location>
        <begin position="136"/>
        <end position="143"/>
    </location>
    <ligand>
        <name>GTP</name>
        <dbReference type="ChEBI" id="CHEBI:37565"/>
    </ligand>
</feature>
<feature type="binding site" evidence="2">
    <location>
        <begin position="204"/>
        <end position="208"/>
    </location>
    <ligand>
        <name>GTP</name>
        <dbReference type="ChEBI" id="CHEBI:37565"/>
    </ligand>
</feature>
<feature type="binding site" evidence="2">
    <location>
        <begin position="258"/>
        <end position="261"/>
    </location>
    <ligand>
        <name>GTP</name>
        <dbReference type="ChEBI" id="CHEBI:37565"/>
    </ligand>
</feature>
<feature type="modified residue" description="N-acetylmethionine" evidence="1">
    <location>
        <position position="1"/>
    </location>
</feature>
<feature type="modified residue" description="Phosphoserine" evidence="1">
    <location>
        <position position="19"/>
    </location>
</feature>
<feature type="modified residue" description="Phosphothreonine" evidence="1">
    <location>
        <position position="86"/>
    </location>
</feature>
<feature type="cross-link" description="Glycyl lysine isopeptide (Lys-Gly) (interchain with G-Cter in SUMO1); alternate" evidence="1">
    <location>
        <position position="64"/>
    </location>
</feature>
<feature type="cross-link" description="Glycyl lysine isopeptide (Lys-Gly) (interchain with G-Cter in SUMO2); alternate" evidence="1">
    <location>
        <position position="64"/>
    </location>
</feature>
<protein>
    <recommendedName>
        <fullName>116 kDa U5 small nuclear ribonucleoprotein component</fullName>
    </recommendedName>
    <alternativeName>
        <fullName>Elongation factor Tu GTP-binding domain protein 2</fullName>
    </alternativeName>
    <alternativeName>
        <fullName>U5 snRNP-specific protein, 116 kDa</fullName>
        <shortName>U5-116 kDa</shortName>
    </alternativeName>
</protein>
<keyword id="KW-0007">Acetylation</keyword>
<keyword id="KW-0342">GTP-binding</keyword>
<keyword id="KW-1017">Isopeptide bond</keyword>
<keyword id="KW-0507">mRNA processing</keyword>
<keyword id="KW-0508">mRNA splicing</keyword>
<keyword id="KW-0547">Nucleotide-binding</keyword>
<keyword id="KW-0539">Nucleus</keyword>
<keyword id="KW-0597">Phosphoprotein</keyword>
<keyword id="KW-1185">Reference proteome</keyword>
<keyword id="KW-0747">Spliceosome</keyword>
<keyword id="KW-0832">Ubl conjugation</keyword>
<reference key="1">
    <citation type="submission" date="2004-11" db="EMBL/GenBank/DDBJ databases">
        <authorList>
            <consortium name="The German cDNA consortium"/>
        </authorList>
    </citation>
    <scope>NUCLEOTIDE SEQUENCE [LARGE SCALE MRNA]</scope>
    <source>
        <tissue>Brain cortex</tissue>
    </source>
</reference>
<name>U5S1_PONAB</name>
<organism>
    <name type="scientific">Pongo abelii</name>
    <name type="common">Sumatran orangutan</name>
    <name type="synonym">Pongo pygmaeus abelii</name>
    <dbReference type="NCBI Taxonomy" id="9601"/>
    <lineage>
        <taxon>Eukaryota</taxon>
        <taxon>Metazoa</taxon>
        <taxon>Chordata</taxon>
        <taxon>Craniata</taxon>
        <taxon>Vertebrata</taxon>
        <taxon>Euteleostomi</taxon>
        <taxon>Mammalia</taxon>
        <taxon>Eutheria</taxon>
        <taxon>Euarchontoglires</taxon>
        <taxon>Primates</taxon>
        <taxon>Haplorrhini</taxon>
        <taxon>Catarrhini</taxon>
        <taxon>Hominidae</taxon>
        <taxon>Pongo</taxon>
    </lineage>
</organism>
<proteinExistence type="evidence at transcript level"/>
<evidence type="ECO:0000250" key="1">
    <source>
        <dbReference type="UniProtKB" id="Q15029"/>
    </source>
</evidence>
<evidence type="ECO:0000255" key="2"/>
<evidence type="ECO:0000255" key="3">
    <source>
        <dbReference type="PROSITE-ProRule" id="PRU01059"/>
    </source>
</evidence>
<evidence type="ECO:0000256" key="4">
    <source>
        <dbReference type="SAM" id="MobiDB-lite"/>
    </source>
</evidence>
<sequence>MDTDLYDEFGNYIGPELDSDEDDDELGRETKDLDEMDDDDDDDDIGDHDDDHPGMEVVLHEDKKYYPTAEEVYGPEVETIVQEEDTQPLTEPIIKPVKTKKFTLMEQTLPVTVYEMDFLADLMDNSELIRNVTLCGHLHHGKTCFVDCLIEQTHPEIRKRYDQDLCYTDILFTEQERGVGIKSTPVTVVLPDTKGKSYLFNIMDTPGHVNFSDEVTAGLRISDGVVLFIDAAEGVMLNTERLIKHAVQERLAVTVCINKIDRLILELKLPPTDAYYKLRHIVDEVNGLISMYSTDENLILSPLLGNVCFSSSQYSICFTLGSFAKIYADTFGDINYQEFAKRLWGDIYFNPKTRKFTKKAPTSSSQRSFVEFILEPLYKILAQVVGDVDTSLPRTLDELGIHLTKEELKLNIRPLLRLVCKKFFGEFTGFVDMCVQHIPSPKVGAKPKIEHTYTGGVDSDLGEAMSDCDPDGPLMCHTTKMYSTDDGVQFHAFGRVLSGTIHAGQPVKVLGENYTLEDEEDSQICTVGRLWISVARYHIEVNRVPAGNWVLIEGVDQPIVKTATITEPRGNEEAQIFRPLKFNTTSVIKIAVEPVNPSELPKMLDGLRKVNKSYPSLTTKVEESGEHVILGTGELYLDCVMHDLPKMYSEIDIKVADPVVTFCETVVETSSLKCFAETPNKKNKITMIAEPLEKGLAEDIENEVVQITWNRKKLGEFFQTKYDWDLLAARSIWAFGPDATGPNILVDDTLPSEVDKALLGSVKDSIVQGFQWGTREGPLCDELIRNVKFKILDAVVAQEPLHRGGGQIIPTARRVVYSAFLMATPRLMEPYYFVEVQAPADCVSAVYTVLARRRGHVTQDAPIPGSPLYTIKAFIPAIDSFGFETDLRTHTQGQAFSLSVFHHWQIVPGDPLDKSIVIRPLEPQPAPHLAREFMIKTRRRKGLSEDVSISKFFDDPMLLELAKQDVVLNYPM</sequence>
<comment type="function">
    <text evidence="1">Required for pre-mRNA splicing as component of the spliceosome, including pre-catalytic, catalytic and post-catalytic spliceosomal complexes (By similarity). Component of the U5 snRNP and the U4/U6-U5 tri-snRNP complex, a building block of the spliceosome (By similarity). As a component of the minor spliceosome, involved in the splicing of U12-type introns in pre-mRNAs (By similarity).</text>
</comment>
<comment type="subunit">
    <text evidence="1">Component of the U5 snRNP and the U4/U6-U5 tri-snRNP complex, a building block of the spliceosome (By similarity). The U4/U6-U5 tri-snRNP complex is composed of the U4, U6 and U5 snRNAs and at least PRPF3, PRPF4, PRPF6, PRPF8, PRPF31, SNRNP200, TXNL4A, SNRNP40, DDX23, CD2BP2, PPIH, SNU13, EFTUD2, SART1 and USP39 (By similarity). Component of the pre-catalytic, catalytic and post-catalytic spliceosome complexes (By similarity). Component of the minor spliceosome, which splices U12-type introns. Within this complex, interacts with CRIPT (By similarity). Interacts with ERBB4 and PRPF8 (By similarity). Interacts with PIH1D1 (By similarity). Interacts with RPAP3 and URI1 in a ZNHIT2-dependent manner (By similarity). Interacts with NRDE2 (By similarity). Interacts with FAM50A (By similarity). Interacts with UBL5 (By similarity).</text>
</comment>
<comment type="subcellular location">
    <subcellularLocation>
        <location evidence="1">Nucleus</location>
    </subcellularLocation>
</comment>
<comment type="similarity">
    <text evidence="3">Belongs to the TRAFAC class translation factor GTPase superfamily. Classic translation factor GTPase family. EF-G/EF-2 subfamily.</text>
</comment>